<sequence length="312" mass="35693">MRIQLNTIDLQCIIALSCLGQFVHAEANREDLKQIDFQFPVLERAATKTPFPDWLSAFTGLKEWPGLDPPYIPLDFIDFSQIPDYKEYDQNHCDSVPRDSCSFDCHHCTEHDDVYTCSKLSQTFDDGPSASTTKLLDRLKHNSTFFNLGVNIVQHPDIYQRMQKEGHLIGSHTWSHVYLPNVSNEKIIAQIEWSIWAMNATGNHTPKWFRPPYGGIDNRVRAITRQFGLQAVLWDHDTFDWSLLLNDSVITEQEILQNVINWNKSGTGLILEHDSTEKTVDLAIKINKLIGDDQSTVSHCVGGIDYIKEFLS</sequence>
<proteinExistence type="evidence at protein level"/>
<feature type="signal peptide" evidence="4">
    <location>
        <begin position="1"/>
        <end position="44"/>
    </location>
</feature>
<feature type="chain" id="PRO_0000024827" description="Chitin deacetylase 2">
    <location>
        <begin position="45"/>
        <end position="312"/>
    </location>
</feature>
<feature type="domain" description="NodB homology" evidence="3">
    <location>
        <begin position="118"/>
        <end position="307"/>
    </location>
</feature>
<feature type="active site" description="Proton acceptor" evidence="3">
    <location>
        <position position="125"/>
    </location>
</feature>
<feature type="active site" description="Proton donor" evidence="3">
    <location>
        <position position="273"/>
    </location>
</feature>
<feature type="binding site" evidence="1">
    <location>
        <position position="125"/>
    </location>
    <ligand>
        <name>acetate</name>
        <dbReference type="ChEBI" id="CHEBI:30089"/>
    </ligand>
</feature>
<feature type="binding site" evidence="1">
    <location>
        <position position="126"/>
    </location>
    <ligand>
        <name>Co(2+)</name>
        <dbReference type="ChEBI" id="CHEBI:48828"/>
    </ligand>
</feature>
<feature type="binding site" evidence="1">
    <location>
        <position position="172"/>
    </location>
    <ligand>
        <name>Co(2+)</name>
        <dbReference type="ChEBI" id="CHEBI:48828"/>
    </ligand>
</feature>
<feature type="binding site" evidence="1">
    <location>
        <position position="176"/>
    </location>
    <ligand>
        <name>Co(2+)</name>
        <dbReference type="ChEBI" id="CHEBI:48828"/>
    </ligand>
</feature>
<feature type="binding site" evidence="1">
    <location>
        <position position="213"/>
    </location>
    <ligand>
        <name>acetate</name>
        <dbReference type="ChEBI" id="CHEBI:30089"/>
    </ligand>
</feature>
<feature type="glycosylation site" description="N-linked (GlcNAc...) asparagine" evidence="2">
    <location>
        <position position="142"/>
    </location>
</feature>
<feature type="glycosylation site" description="N-linked (GlcNAc...) asparagine" evidence="2">
    <location>
        <position position="181"/>
    </location>
</feature>
<feature type="glycosylation site" description="N-linked (GlcNAc...) asparagine" evidence="2">
    <location>
        <position position="199"/>
    </location>
</feature>
<feature type="glycosylation site" description="N-linked (GlcNAc...) asparagine" evidence="2">
    <location>
        <position position="246"/>
    </location>
</feature>
<feature type="glycosylation site" description="N-linked (GlcNAc...) asparagine" evidence="2">
    <location>
        <position position="263"/>
    </location>
</feature>
<feature type="disulfide bond" evidence="1">
    <location>
        <begin position="117"/>
        <end position="300"/>
    </location>
</feature>
<gene>
    <name evidence="6" type="primary">CDA2</name>
    <name type="ordered locus">YLR308W</name>
    <name type="ORF">L2142.1</name>
</gene>
<organism>
    <name type="scientific">Saccharomyces cerevisiae (strain ATCC 204508 / S288c)</name>
    <name type="common">Baker's yeast</name>
    <dbReference type="NCBI Taxonomy" id="559292"/>
    <lineage>
        <taxon>Eukaryota</taxon>
        <taxon>Fungi</taxon>
        <taxon>Dikarya</taxon>
        <taxon>Ascomycota</taxon>
        <taxon>Saccharomycotina</taxon>
        <taxon>Saccharomycetes</taxon>
        <taxon>Saccharomycetales</taxon>
        <taxon>Saccharomycetaceae</taxon>
        <taxon>Saccharomyces</taxon>
    </lineage>
</organism>
<comment type="function">
    <text evidence="4 5">Hydrolyzes the N-acetamido groups of N-acetyl-D-glucosamine residues in chitin to form chitosan and acetate (PubMed:11812231, PubMed:9133736). Chitosan is a component of the spore wall (PubMed:9133736).</text>
</comment>
<comment type="catalytic activity">
    <reaction evidence="4 9">
        <text>[(1-&gt;4)-N-acetyl-beta-D-glucosaminyl](n) + n H2O = chitosan + n acetate</text>
        <dbReference type="Rhea" id="RHEA:10464"/>
        <dbReference type="Rhea" id="RHEA-COMP:9593"/>
        <dbReference type="Rhea" id="RHEA-COMP:9597"/>
        <dbReference type="ChEBI" id="CHEBI:15377"/>
        <dbReference type="ChEBI" id="CHEBI:17029"/>
        <dbReference type="ChEBI" id="CHEBI:30089"/>
        <dbReference type="ChEBI" id="CHEBI:57704"/>
        <dbReference type="EC" id="3.5.1.41"/>
    </reaction>
    <physiologicalReaction direction="left-to-right" evidence="8">
        <dbReference type="Rhea" id="RHEA:10465"/>
    </physiologicalReaction>
</comment>
<comment type="cofactor">
    <cofactor evidence="4">
        <name>Co(2+)</name>
        <dbReference type="ChEBI" id="CHEBI:48828"/>
    </cofactor>
</comment>
<comment type="biophysicochemical properties">
    <kinetics>
        <KM evidence="4">1.6 mM for GlcNAc(6) (at 50 degrees Celsius and pH 8)</KM>
    </kinetics>
    <phDependence>
        <text evidence="4">Optimum pH is 8.</text>
    </phDependence>
    <temperatureDependence>
        <text evidence="4">Optimum temperature is 50 degrees Celsius.</text>
    </temperatureDependence>
</comment>
<comment type="subunit">
    <text evidence="4">Monomer.</text>
</comment>
<comment type="subcellular location">
    <subcellularLocation>
        <location evidence="9">Prospore</location>
    </subcellularLocation>
</comment>
<comment type="developmental stage">
    <text evidence="5">Induced during sporulation.</text>
</comment>
<comment type="PTM">
    <text evidence="4">N-glycosylated.</text>
</comment>
<comment type="similarity">
    <text evidence="7">Belongs to the polysaccharide deacetylase family.</text>
</comment>
<reference key="1">
    <citation type="journal article" date="1997" name="Nature">
        <title>The nucleotide sequence of Saccharomyces cerevisiae chromosome XII.</title>
        <authorList>
            <person name="Johnston M."/>
            <person name="Hillier L.W."/>
            <person name="Riles L."/>
            <person name="Albermann K."/>
            <person name="Andre B."/>
            <person name="Ansorge W."/>
            <person name="Benes V."/>
            <person name="Brueckner M."/>
            <person name="Delius H."/>
            <person name="Dubois E."/>
            <person name="Duesterhoeft A."/>
            <person name="Entian K.-D."/>
            <person name="Floeth M."/>
            <person name="Goffeau A."/>
            <person name="Hebling U."/>
            <person name="Heumann K."/>
            <person name="Heuss-Neitzel D."/>
            <person name="Hilbert H."/>
            <person name="Hilger F."/>
            <person name="Kleine K."/>
            <person name="Koetter P."/>
            <person name="Louis E.J."/>
            <person name="Messenguy F."/>
            <person name="Mewes H.-W."/>
            <person name="Miosga T."/>
            <person name="Moestl D."/>
            <person name="Mueller-Auer S."/>
            <person name="Nentwich U."/>
            <person name="Obermaier B."/>
            <person name="Piravandi E."/>
            <person name="Pohl T.M."/>
            <person name="Portetelle D."/>
            <person name="Purnelle B."/>
            <person name="Rechmann S."/>
            <person name="Rieger M."/>
            <person name="Rinke M."/>
            <person name="Rose M."/>
            <person name="Scharfe M."/>
            <person name="Scherens B."/>
            <person name="Scholler P."/>
            <person name="Schwager C."/>
            <person name="Schwarz S."/>
            <person name="Underwood A.P."/>
            <person name="Urrestarazu L.A."/>
            <person name="Vandenbol M."/>
            <person name="Verhasselt P."/>
            <person name="Vierendeels F."/>
            <person name="Voet M."/>
            <person name="Volckaert G."/>
            <person name="Voss H."/>
            <person name="Wambutt R."/>
            <person name="Wedler E."/>
            <person name="Wedler H."/>
            <person name="Zimmermann F.K."/>
            <person name="Zollner A."/>
            <person name="Hani J."/>
            <person name="Hoheisel J.D."/>
        </authorList>
    </citation>
    <scope>NUCLEOTIDE SEQUENCE [LARGE SCALE GENOMIC DNA]</scope>
    <source>
        <strain>ATCC 204508 / S288c</strain>
    </source>
</reference>
<reference key="2">
    <citation type="journal article" date="2014" name="G3 (Bethesda)">
        <title>The reference genome sequence of Saccharomyces cerevisiae: Then and now.</title>
        <authorList>
            <person name="Engel S.R."/>
            <person name="Dietrich F.S."/>
            <person name="Fisk D.G."/>
            <person name="Binkley G."/>
            <person name="Balakrishnan R."/>
            <person name="Costanzo M.C."/>
            <person name="Dwight S.S."/>
            <person name="Hitz B.C."/>
            <person name="Karra K."/>
            <person name="Nash R.S."/>
            <person name="Weng S."/>
            <person name="Wong E.D."/>
            <person name="Lloyd P."/>
            <person name="Skrzypek M.S."/>
            <person name="Miyasato S.R."/>
            <person name="Simison M."/>
            <person name="Cherry J.M."/>
        </authorList>
    </citation>
    <scope>GENOME REANNOTATION</scope>
    <source>
        <strain>ATCC 204508 / S288c</strain>
    </source>
</reference>
<reference key="3">
    <citation type="journal article" date="2007" name="Genome Res.">
        <title>Approaching a complete repository of sequence-verified protein-encoding clones for Saccharomyces cerevisiae.</title>
        <authorList>
            <person name="Hu Y."/>
            <person name="Rolfs A."/>
            <person name="Bhullar B."/>
            <person name="Murthy T.V.S."/>
            <person name="Zhu C."/>
            <person name="Berger M.F."/>
            <person name="Camargo A.A."/>
            <person name="Kelley F."/>
            <person name="McCarron S."/>
            <person name="Jepson D."/>
            <person name="Richardson A."/>
            <person name="Raphael J."/>
            <person name="Moreira D."/>
            <person name="Taycher E."/>
            <person name="Zuo D."/>
            <person name="Mohr S."/>
            <person name="Kane M.F."/>
            <person name="Williamson J."/>
            <person name="Simpson A.J.G."/>
            <person name="Bulyk M.L."/>
            <person name="Harlow E."/>
            <person name="Marsischky G."/>
            <person name="Kolodner R.D."/>
            <person name="LaBaer J."/>
        </authorList>
    </citation>
    <scope>NUCLEOTIDE SEQUENCE [GENOMIC DNA]</scope>
    <source>
        <strain>ATCC 204508 / S288c</strain>
    </source>
</reference>
<reference key="4">
    <citation type="journal article" date="1997" name="Yeast">
        <title>Cloning and expression of two chitin deacetylase genes of Saccharomyces cerevisiae.</title>
        <authorList>
            <person name="Mishra C."/>
            <person name="Semino C.E."/>
            <person name="McCreath K.J."/>
            <person name="de la Vega H."/>
            <person name="Jones B.J."/>
            <person name="Specht C.A."/>
            <person name="Robbins P.W."/>
        </authorList>
    </citation>
    <scope>FUNCTION</scope>
    <scope>CATALYTIC ACTIVITY</scope>
    <scope>DEVELOPMENTAL STAGE</scope>
</reference>
<reference key="5">
    <citation type="journal article" date="2002" name="Protein Expr. Purif.">
        <title>Expression, purification, and characterization of a cobalt-activated chitin deacetylase (Cda2p) from Saccharomyces cerevisiae.</title>
        <authorList>
            <person name="Martinou A."/>
            <person name="Koutsioulis D."/>
            <person name="Bouriotis V."/>
        </authorList>
    </citation>
    <scope>PROTEIN SEQUENCE OF 45-55</scope>
    <scope>FUNCTION</scope>
    <scope>CATALYTIC ACTIVITY</scope>
    <scope>COFACTOR</scope>
    <scope>BIOPHYSICOCHEMICAL PROPERTIES</scope>
    <scope>SUBUNIT</scope>
    <scope>GLYCOSYLATION</scope>
</reference>
<keyword id="KW-0119">Carbohydrate metabolism</keyword>
<keyword id="KW-0961">Cell wall biogenesis/degradation</keyword>
<keyword id="KW-0146">Chitin degradation</keyword>
<keyword id="KW-0147">Chitin-binding</keyword>
<keyword id="KW-0170">Cobalt</keyword>
<keyword id="KW-0903">Direct protein sequencing</keyword>
<keyword id="KW-1015">Disulfide bond</keyword>
<keyword id="KW-0325">Glycoprotein</keyword>
<keyword id="KW-0378">Hydrolase</keyword>
<keyword id="KW-0479">Metal-binding</keyword>
<keyword id="KW-0624">Polysaccharide degradation</keyword>
<keyword id="KW-1185">Reference proteome</keyword>
<keyword id="KW-0732">Signal</keyword>
<keyword id="KW-0749">Sporulation</keyword>
<protein>
    <recommendedName>
        <fullName evidence="6">Chitin deacetylase 2</fullName>
        <ecNumber evidence="4 9">3.5.1.41</ecNumber>
    </recommendedName>
</protein>
<accession>Q06703</accession>
<accession>D6VYV2</accession>
<evidence type="ECO:0000250" key="1">
    <source>
        <dbReference type="UniProtKB" id="Q6DWK3"/>
    </source>
</evidence>
<evidence type="ECO:0000255" key="2"/>
<evidence type="ECO:0000255" key="3">
    <source>
        <dbReference type="PROSITE-ProRule" id="PRU01014"/>
    </source>
</evidence>
<evidence type="ECO:0000269" key="4">
    <source>
    </source>
</evidence>
<evidence type="ECO:0000269" key="5">
    <source>
    </source>
</evidence>
<evidence type="ECO:0000303" key="6">
    <source>
    </source>
</evidence>
<evidence type="ECO:0000305" key="7"/>
<evidence type="ECO:0000305" key="8">
    <source>
    </source>
</evidence>
<evidence type="ECO:0000305" key="9">
    <source>
    </source>
</evidence>
<dbReference type="EC" id="3.5.1.41" evidence="4 9"/>
<dbReference type="EMBL" id="U17247">
    <property type="protein sequence ID" value="AAB67355.1"/>
    <property type="molecule type" value="Genomic_DNA"/>
</dbReference>
<dbReference type="EMBL" id="AY557951">
    <property type="protein sequence ID" value="AAS56277.1"/>
    <property type="molecule type" value="Genomic_DNA"/>
</dbReference>
<dbReference type="EMBL" id="BK006945">
    <property type="protein sequence ID" value="DAA09618.1"/>
    <property type="molecule type" value="Genomic_DNA"/>
</dbReference>
<dbReference type="PIR" id="S51440">
    <property type="entry name" value="S51440"/>
</dbReference>
<dbReference type="RefSeq" id="NP_013411.1">
    <property type="nucleotide sequence ID" value="NM_001182196.1"/>
</dbReference>
<dbReference type="SMR" id="Q06703"/>
<dbReference type="BioGRID" id="31573">
    <property type="interactions" value="76"/>
</dbReference>
<dbReference type="DIP" id="DIP-4678N"/>
<dbReference type="FunCoup" id="Q06703">
    <property type="interactions" value="63"/>
</dbReference>
<dbReference type="STRING" id="4932.YLR308W"/>
<dbReference type="GlyCosmos" id="Q06703">
    <property type="glycosylation" value="5 sites, No reported glycans"/>
</dbReference>
<dbReference type="GlyGen" id="Q06703">
    <property type="glycosylation" value="5 sites"/>
</dbReference>
<dbReference type="PaxDb" id="4932-YLR308W"/>
<dbReference type="PeptideAtlas" id="Q06703"/>
<dbReference type="EnsemblFungi" id="YLR308W_mRNA">
    <property type="protein sequence ID" value="YLR308W"/>
    <property type="gene ID" value="YLR308W"/>
</dbReference>
<dbReference type="GeneID" id="851017"/>
<dbReference type="KEGG" id="sce:YLR308W"/>
<dbReference type="AGR" id="SGD:S000004299"/>
<dbReference type="SGD" id="S000004299">
    <property type="gene designation" value="CDA2"/>
</dbReference>
<dbReference type="VEuPathDB" id="FungiDB:YLR308W"/>
<dbReference type="eggNOG" id="ENOG502QRIP">
    <property type="taxonomic scope" value="Eukaryota"/>
</dbReference>
<dbReference type="GeneTree" id="ENSGT00940000176634"/>
<dbReference type="HOGENOM" id="CLU_030200_1_0_1"/>
<dbReference type="InParanoid" id="Q06703"/>
<dbReference type="OMA" id="QWSIWAM"/>
<dbReference type="OrthoDB" id="2125469at2759"/>
<dbReference type="BioCyc" id="MetaCyc:YLR308W-MONOMER"/>
<dbReference type="BioCyc" id="YEAST:YLR308W-MONOMER"/>
<dbReference type="BRENDA" id="3.5.1.41">
    <property type="organism ID" value="984"/>
</dbReference>
<dbReference type="BioGRID-ORCS" id="851017">
    <property type="hits" value="1 hit in 10 CRISPR screens"/>
</dbReference>
<dbReference type="PRO" id="PR:Q06703"/>
<dbReference type="Proteomes" id="UP000002311">
    <property type="component" value="Chromosome XII"/>
</dbReference>
<dbReference type="RNAct" id="Q06703">
    <property type="molecule type" value="protein"/>
</dbReference>
<dbReference type="GO" id="GO:0042764">
    <property type="term" value="C:ascospore-type prospore"/>
    <property type="evidence" value="ECO:0007669"/>
    <property type="project" value="UniProtKB-SubCell"/>
</dbReference>
<dbReference type="GO" id="GO:0008061">
    <property type="term" value="F:chitin binding"/>
    <property type="evidence" value="ECO:0007669"/>
    <property type="project" value="UniProtKB-KW"/>
</dbReference>
<dbReference type="GO" id="GO:0004099">
    <property type="term" value="F:chitin deacetylase activity"/>
    <property type="evidence" value="ECO:0000314"/>
    <property type="project" value="UniProtKB"/>
</dbReference>
<dbReference type="GO" id="GO:0050897">
    <property type="term" value="F:cobalt ion binding"/>
    <property type="evidence" value="ECO:0000314"/>
    <property type="project" value="UniProtKB"/>
</dbReference>
<dbReference type="GO" id="GO:0030476">
    <property type="term" value="P:ascospore wall assembly"/>
    <property type="evidence" value="ECO:0000315"/>
    <property type="project" value="SGD"/>
</dbReference>
<dbReference type="GO" id="GO:0006032">
    <property type="term" value="P:chitin catabolic process"/>
    <property type="evidence" value="ECO:0000314"/>
    <property type="project" value="UniProtKB"/>
</dbReference>
<dbReference type="GO" id="GO:0000272">
    <property type="term" value="P:polysaccharide catabolic process"/>
    <property type="evidence" value="ECO:0007669"/>
    <property type="project" value="UniProtKB-KW"/>
</dbReference>
<dbReference type="FunFam" id="3.20.20.370:FF:000008">
    <property type="entry name" value="Chitin deacetylase"/>
    <property type="match status" value="1"/>
</dbReference>
<dbReference type="Gene3D" id="3.20.20.370">
    <property type="entry name" value="Glycoside hydrolase/deacetylase"/>
    <property type="match status" value="1"/>
</dbReference>
<dbReference type="InterPro" id="IPR011330">
    <property type="entry name" value="Glyco_hydro/deAcase_b/a-brl"/>
</dbReference>
<dbReference type="InterPro" id="IPR002509">
    <property type="entry name" value="NODB_dom"/>
</dbReference>
<dbReference type="InterPro" id="IPR050248">
    <property type="entry name" value="Polysacc_deacetylase_ArnD"/>
</dbReference>
<dbReference type="PANTHER" id="PTHR10587:SF133">
    <property type="entry name" value="CHITIN DEACETYLASE 1-RELATED"/>
    <property type="match status" value="1"/>
</dbReference>
<dbReference type="PANTHER" id="PTHR10587">
    <property type="entry name" value="GLYCOSYL TRANSFERASE-RELATED"/>
    <property type="match status" value="1"/>
</dbReference>
<dbReference type="Pfam" id="PF01522">
    <property type="entry name" value="Polysacc_deac_1"/>
    <property type="match status" value="1"/>
</dbReference>
<dbReference type="SUPFAM" id="SSF88713">
    <property type="entry name" value="Glycoside hydrolase/deacetylase"/>
    <property type="match status" value="1"/>
</dbReference>
<dbReference type="PROSITE" id="PS51677">
    <property type="entry name" value="NODB"/>
    <property type="match status" value="1"/>
</dbReference>
<name>CDA2_YEAST</name>